<accession>B4QK53</accession>
<gene>
    <name type="primary">SAK</name>
    <name type="ORF">GD12112</name>
</gene>
<organism>
    <name type="scientific">Drosophila simulans</name>
    <name type="common">Fruit fly</name>
    <dbReference type="NCBI Taxonomy" id="7240"/>
    <lineage>
        <taxon>Eukaryota</taxon>
        <taxon>Metazoa</taxon>
        <taxon>Ecdysozoa</taxon>
        <taxon>Arthropoda</taxon>
        <taxon>Hexapoda</taxon>
        <taxon>Insecta</taxon>
        <taxon>Pterygota</taxon>
        <taxon>Neoptera</taxon>
        <taxon>Endopterygota</taxon>
        <taxon>Diptera</taxon>
        <taxon>Brachycera</taxon>
        <taxon>Muscomorpha</taxon>
        <taxon>Ephydroidea</taxon>
        <taxon>Drosophilidae</taxon>
        <taxon>Drosophila</taxon>
        <taxon>Sophophora</taxon>
    </lineage>
</organism>
<dbReference type="EC" id="2.7.11.21"/>
<dbReference type="EMBL" id="CM000363">
    <property type="protein sequence ID" value="EDX11390.1"/>
    <property type="molecule type" value="Genomic_DNA"/>
</dbReference>
<dbReference type="SMR" id="B4QK53"/>
<dbReference type="STRING" id="7240.B4QK53"/>
<dbReference type="EnsemblMetazoa" id="FBtr0212022">
    <property type="protein sequence ID" value="FBpp0210514"/>
    <property type="gene ID" value="FBgn0183849"/>
</dbReference>
<dbReference type="EnsemblMetazoa" id="XM_002085769.4">
    <property type="protein sequence ID" value="XP_002085805.1"/>
    <property type="gene ID" value="LOC6739010"/>
</dbReference>
<dbReference type="GeneID" id="6739010"/>
<dbReference type="HOGENOM" id="CLU_008726_2_0_1"/>
<dbReference type="OMA" id="LPSKHWK"/>
<dbReference type="OrthoDB" id="10004143at2759"/>
<dbReference type="PhylomeDB" id="B4QK53"/>
<dbReference type="ChiTaRS" id="SAK">
    <property type="organism name" value="fly"/>
</dbReference>
<dbReference type="Proteomes" id="UP000000304">
    <property type="component" value="Chromosome 3L"/>
</dbReference>
<dbReference type="Bgee" id="FBgn0183849">
    <property type="expression patterns" value="Expressed in embryo and 3 other cell types or tissues"/>
</dbReference>
<dbReference type="GO" id="GO:0005814">
    <property type="term" value="C:centriole"/>
    <property type="evidence" value="ECO:0007669"/>
    <property type="project" value="UniProtKB-SubCell"/>
</dbReference>
<dbReference type="GO" id="GO:0005737">
    <property type="term" value="C:cytoplasm"/>
    <property type="evidence" value="ECO:0007669"/>
    <property type="project" value="UniProtKB-KW"/>
</dbReference>
<dbReference type="GO" id="GO:0005634">
    <property type="term" value="C:nucleus"/>
    <property type="evidence" value="ECO:0007669"/>
    <property type="project" value="TreeGrafter"/>
</dbReference>
<dbReference type="GO" id="GO:0005524">
    <property type="term" value="F:ATP binding"/>
    <property type="evidence" value="ECO:0007669"/>
    <property type="project" value="UniProtKB-KW"/>
</dbReference>
<dbReference type="GO" id="GO:0042802">
    <property type="term" value="F:identical protein binding"/>
    <property type="evidence" value="ECO:0007669"/>
    <property type="project" value="EnsemblMetazoa"/>
</dbReference>
<dbReference type="GO" id="GO:0106310">
    <property type="term" value="F:protein serine kinase activity"/>
    <property type="evidence" value="ECO:0007669"/>
    <property type="project" value="RHEA"/>
</dbReference>
<dbReference type="GO" id="GO:0004674">
    <property type="term" value="F:protein serine/threonine kinase activity"/>
    <property type="evidence" value="ECO:0007669"/>
    <property type="project" value="UniProtKB-KW"/>
</dbReference>
<dbReference type="GO" id="GO:0007099">
    <property type="term" value="P:centriole replication"/>
    <property type="evidence" value="ECO:0007669"/>
    <property type="project" value="EnsemblMetazoa"/>
</dbReference>
<dbReference type="GO" id="GO:0007140">
    <property type="term" value="P:male meiotic nuclear division"/>
    <property type="evidence" value="ECO:0007669"/>
    <property type="project" value="EnsemblMetazoa"/>
</dbReference>
<dbReference type="GO" id="GO:0045732">
    <property type="term" value="P:positive regulation of protein catabolic process"/>
    <property type="evidence" value="ECO:0007669"/>
    <property type="project" value="EnsemblMetazoa"/>
</dbReference>
<dbReference type="GO" id="GO:0046599">
    <property type="term" value="P:regulation of centriole replication"/>
    <property type="evidence" value="ECO:0007669"/>
    <property type="project" value="EnsemblMetazoa"/>
</dbReference>
<dbReference type="GO" id="GO:0031647">
    <property type="term" value="P:regulation of protein stability"/>
    <property type="evidence" value="ECO:0007669"/>
    <property type="project" value="EnsemblMetazoa"/>
</dbReference>
<dbReference type="GO" id="GO:0007288">
    <property type="term" value="P:sperm axoneme assembly"/>
    <property type="evidence" value="ECO:0007669"/>
    <property type="project" value="EnsemblMetazoa"/>
</dbReference>
<dbReference type="GO" id="GO:0035186">
    <property type="term" value="P:syncytial blastoderm mitotic cell cycle"/>
    <property type="evidence" value="ECO:0007669"/>
    <property type="project" value="EnsemblMetazoa"/>
</dbReference>
<dbReference type="CDD" id="cd13114">
    <property type="entry name" value="POLO_box_Plk4_1"/>
    <property type="match status" value="1"/>
</dbReference>
<dbReference type="CDD" id="cd13115">
    <property type="entry name" value="POLO_box_Plk4_2"/>
    <property type="match status" value="1"/>
</dbReference>
<dbReference type="CDD" id="cd13116">
    <property type="entry name" value="POLO_box_Plk4_3"/>
    <property type="match status" value="1"/>
</dbReference>
<dbReference type="FunFam" id="3.30.200.20:FF:000042">
    <property type="entry name" value="Aurora kinase A"/>
    <property type="match status" value="1"/>
</dbReference>
<dbReference type="FunFam" id="1.10.510.10:FF:000576">
    <property type="entry name" value="Serine/threonine-protein kinase PLK4"/>
    <property type="match status" value="1"/>
</dbReference>
<dbReference type="FunFam" id="2.40.50.930:FF:000001">
    <property type="entry name" value="Serine/threonine-protein kinase PLK4"/>
    <property type="match status" value="1"/>
</dbReference>
<dbReference type="FunFam" id="3.30.1120.130:FF:000002">
    <property type="entry name" value="Serine/threonine-protein kinase PLK4"/>
    <property type="match status" value="1"/>
</dbReference>
<dbReference type="FunFam" id="3.30.1120.120:FF:000001">
    <property type="entry name" value="serine/threonine-protein kinase PLK4 isoform X2"/>
    <property type="match status" value="1"/>
</dbReference>
<dbReference type="Gene3D" id="2.40.50.930">
    <property type="match status" value="1"/>
</dbReference>
<dbReference type="Gene3D" id="3.30.1120.120">
    <property type="match status" value="1"/>
</dbReference>
<dbReference type="Gene3D" id="3.30.1120.130">
    <property type="match status" value="1"/>
</dbReference>
<dbReference type="Gene3D" id="1.10.510.10">
    <property type="entry name" value="Transferase(Phosphotransferase) domain 1"/>
    <property type="match status" value="1"/>
</dbReference>
<dbReference type="InterPro" id="IPR011009">
    <property type="entry name" value="Kinase-like_dom_sf"/>
</dbReference>
<dbReference type="InterPro" id="IPR047108">
    <property type="entry name" value="Plk4-like_POLO_box_2_sf"/>
</dbReference>
<dbReference type="InterPro" id="IPR000959">
    <property type="entry name" value="POLO_box_dom"/>
</dbReference>
<dbReference type="InterPro" id="IPR033699">
    <property type="entry name" value="POLO_box_Plk4_1"/>
</dbReference>
<dbReference type="InterPro" id="IPR033698">
    <property type="entry name" value="POLO_box_Plk4_2"/>
</dbReference>
<dbReference type="InterPro" id="IPR033696">
    <property type="entry name" value="POLO_box_Plk4_C"/>
</dbReference>
<dbReference type="InterPro" id="IPR000719">
    <property type="entry name" value="Prot_kinase_dom"/>
</dbReference>
<dbReference type="InterPro" id="IPR017441">
    <property type="entry name" value="Protein_kinase_ATP_BS"/>
</dbReference>
<dbReference type="InterPro" id="IPR046437">
    <property type="entry name" value="Ser_Thr-PK_POLO_box_1_sf"/>
</dbReference>
<dbReference type="InterPro" id="IPR008266">
    <property type="entry name" value="Tyr_kinase_AS"/>
</dbReference>
<dbReference type="PANTHER" id="PTHR24345">
    <property type="entry name" value="SERINE/THREONINE-PROTEIN KINASE PLK"/>
    <property type="match status" value="1"/>
</dbReference>
<dbReference type="PANTHER" id="PTHR24345:SF91">
    <property type="entry name" value="SERINE_THREONINE-PROTEIN KINASE PLK4"/>
    <property type="match status" value="1"/>
</dbReference>
<dbReference type="Pfam" id="PF00069">
    <property type="entry name" value="Pkinase"/>
    <property type="match status" value="1"/>
</dbReference>
<dbReference type="Pfam" id="PF18190">
    <property type="entry name" value="Plk4_PB1"/>
    <property type="match status" value="1"/>
</dbReference>
<dbReference type="Pfam" id="PF18409">
    <property type="entry name" value="Plk4_PB2"/>
    <property type="match status" value="1"/>
</dbReference>
<dbReference type="SUPFAM" id="SSF82615">
    <property type="entry name" value="Polo-box domain"/>
    <property type="match status" value="1"/>
</dbReference>
<dbReference type="SUPFAM" id="SSF56112">
    <property type="entry name" value="Protein kinase-like (PK-like)"/>
    <property type="match status" value="1"/>
</dbReference>
<dbReference type="PROSITE" id="PS51984">
    <property type="entry name" value="CPB1"/>
    <property type="match status" value="1"/>
</dbReference>
<dbReference type="PROSITE" id="PS51985">
    <property type="entry name" value="CPB2"/>
    <property type="match status" value="1"/>
</dbReference>
<dbReference type="PROSITE" id="PS50078">
    <property type="entry name" value="POLO_BOX"/>
    <property type="match status" value="1"/>
</dbReference>
<dbReference type="PROSITE" id="PS00107">
    <property type="entry name" value="PROTEIN_KINASE_ATP"/>
    <property type="match status" value="1"/>
</dbReference>
<dbReference type="PROSITE" id="PS50011">
    <property type="entry name" value="PROTEIN_KINASE_DOM"/>
    <property type="match status" value="1"/>
</dbReference>
<sequence length="769" mass="86012">MLSNRAFGETIEDYEVQHLLGKGGFATVYKARCLHTHQDVAIKMIDKKLIQGTGLTSRVRQEVEIHSRLKHPSVLQLYTFFQDANYVYLVLELAHNGELHRYMNHIARPFTETEAASILKQVVAGLLYLHSHNIMHRDISLSNLLLSREMHVKIADFGLATQLKRPDERHMTMCGTPNYISPEVVSRSSHGLPADVWSVGCMLYTLLVGRPPFETDAVQSTLNKVVMSEYIMPAHLSYEAQDLINKLLKKLPHERITLEAVLCHPFMLKCSNGVHSAPGALNVFSQSMESGDSGIITFASSDSRNSQQIRSVENSGPQQVLPQIREEFKQVHHKLPYEQPGLFGQASTGLAEPNWPGAAKTSAFRMETGMVPNSKPASLKEDRISVPPLNTKRLLPTRYKTKNAIMSILRNGEVVLEFLKFRPTYNEDRINDICRISDDGQRIIIYQPDPGRGLPVREQPPDLQIPSGDCVYNYDNLPNKHWKKYIYGARFVGLVKSKTPKVTYFSTLGKCQLMETMTDFEIRFYSGAKLLKTPSEGLKVYDRNGMLLSDHSCSESRSLIEHGNECFTHCVNISNALEVAQTKDNSCFPVTIGRRPITDVQPAQRLDGLRDTTNIAFSTPKSNQGSINFSLSTISSTRNTSDFGTNCSRSNMLAAHQNIPIKRINVPDIGIATELSHGVVQVQFYDGSVVSVIPSMQGGGITYTQPNGTSTHFGKDDDLPFPVRDRVGQIPNIQLKLKTAPLLGSGRKTDYNNAMTPKTTTPYYNRMLL</sequence>
<keyword id="KW-0067">ATP-binding</keyword>
<keyword id="KW-0963">Cytoplasm</keyword>
<keyword id="KW-0206">Cytoskeleton</keyword>
<keyword id="KW-0418">Kinase</keyword>
<keyword id="KW-0547">Nucleotide-binding</keyword>
<keyword id="KW-1185">Reference proteome</keyword>
<keyword id="KW-0723">Serine/threonine-protein kinase</keyword>
<keyword id="KW-0808">Transferase</keyword>
<keyword id="KW-0832">Ubl conjugation</keyword>
<reference key="1">
    <citation type="journal article" date="2007" name="Nature">
        <title>Evolution of genes and genomes on the Drosophila phylogeny.</title>
        <authorList>
            <consortium name="Drosophila 12 genomes consortium"/>
        </authorList>
    </citation>
    <scope>NUCLEOTIDE SEQUENCE [LARGE SCALE GENOMIC DNA]</scope>
</reference>
<comment type="function">
    <text evidence="1">Serine/threonine-protein kinase that plays a central role in centriole duplication. Able to trigger procentriole formation on the surface of the mother centriole cylinder, using mother centriole as a platform, leading to the recruitment of centriole biogenesis proteins such as sas-6. When overexpressed, it is able to induce centrosome amplification through the simultaneous generation of multiple procentrioles adjoining each parental centriole during S phase. Centrosome amplification following overexpression can initiate tumorigenesis, highlighting the importance of centrosome regulation in cancers (By similarity).</text>
</comment>
<comment type="catalytic activity">
    <reaction>
        <text>L-seryl-[protein] + ATP = O-phospho-L-seryl-[protein] + ADP + H(+)</text>
        <dbReference type="Rhea" id="RHEA:17989"/>
        <dbReference type="Rhea" id="RHEA-COMP:9863"/>
        <dbReference type="Rhea" id="RHEA-COMP:11604"/>
        <dbReference type="ChEBI" id="CHEBI:15378"/>
        <dbReference type="ChEBI" id="CHEBI:29999"/>
        <dbReference type="ChEBI" id="CHEBI:30616"/>
        <dbReference type="ChEBI" id="CHEBI:83421"/>
        <dbReference type="ChEBI" id="CHEBI:456216"/>
        <dbReference type="EC" id="2.7.11.21"/>
    </reaction>
</comment>
<comment type="catalytic activity">
    <reaction>
        <text>L-threonyl-[protein] + ATP = O-phospho-L-threonyl-[protein] + ADP + H(+)</text>
        <dbReference type="Rhea" id="RHEA:46608"/>
        <dbReference type="Rhea" id="RHEA-COMP:11060"/>
        <dbReference type="Rhea" id="RHEA-COMP:11605"/>
        <dbReference type="ChEBI" id="CHEBI:15378"/>
        <dbReference type="ChEBI" id="CHEBI:30013"/>
        <dbReference type="ChEBI" id="CHEBI:30616"/>
        <dbReference type="ChEBI" id="CHEBI:61977"/>
        <dbReference type="ChEBI" id="CHEBI:456216"/>
        <dbReference type="EC" id="2.7.11.21"/>
    </reaction>
</comment>
<comment type="subunit">
    <text evidence="1">Homodimer.</text>
</comment>
<comment type="subcellular location">
    <subcellularLocation>
        <location evidence="1">Cytoplasm</location>
        <location evidence="1">Cytoskeleton</location>
        <location evidence="1">Microtubule organizing center</location>
        <location evidence="1">Centrosome</location>
        <location evidence="1">Centriole</location>
    </subcellularLocation>
</comment>
<comment type="PTM">
    <text evidence="1">Ubiquitinated by the SCF(Slimb) ubiquitin ligase complex; leading to its degradation by the proteasome during interphase and regulating centriole number and ensuring the block to centriole reduplication.</text>
</comment>
<comment type="similarity">
    <text evidence="3 4 5">Belongs to the protein kinase superfamily. Ser/Thr protein kinase family. CDC5/Polo subfamily.</text>
</comment>
<evidence type="ECO:0000250" key="1"/>
<evidence type="ECO:0000255" key="2">
    <source>
        <dbReference type="PROSITE-ProRule" id="PRU00154"/>
    </source>
</evidence>
<evidence type="ECO:0000255" key="3">
    <source>
        <dbReference type="PROSITE-ProRule" id="PRU00159"/>
    </source>
</evidence>
<evidence type="ECO:0000255" key="4">
    <source>
        <dbReference type="PROSITE-ProRule" id="PRU01328"/>
    </source>
</evidence>
<evidence type="ECO:0000255" key="5">
    <source>
        <dbReference type="PROSITE-ProRule" id="PRU01329"/>
    </source>
</evidence>
<name>PLK4_DROSI</name>
<protein>
    <recommendedName>
        <fullName>Serine/threonine-protein kinase PLK4</fullName>
        <ecNumber>2.7.11.21</ecNumber>
    </recommendedName>
    <alternativeName>
        <fullName>Polo-like kinase 4</fullName>
        <shortName>PLK-4</shortName>
    </alternativeName>
    <alternativeName>
        <fullName>Serine/threonine-protein kinase SAK</fullName>
    </alternativeName>
</protein>
<feature type="chain" id="PRO_0000385296" description="Serine/threonine-protein kinase PLK4">
    <location>
        <begin position="1"/>
        <end position="769"/>
    </location>
</feature>
<feature type="domain" description="Protein kinase" evidence="3">
    <location>
        <begin position="14"/>
        <end position="267"/>
    </location>
</feature>
<feature type="domain" description="Cryptic POLO box 1 (CPB1)" evidence="4">
    <location>
        <begin position="381"/>
        <end position="498"/>
    </location>
</feature>
<feature type="domain" description="Cryptic POLO box 2 (CPB2)" evidence="5">
    <location>
        <begin position="499"/>
        <end position="602"/>
    </location>
</feature>
<feature type="domain" description="POLO box" evidence="2">
    <location>
        <begin position="660"/>
        <end position="739"/>
    </location>
</feature>
<feature type="active site" description="Proton acceptor" evidence="3">
    <location>
        <position position="138"/>
    </location>
</feature>
<feature type="binding site" evidence="3">
    <location>
        <begin position="20"/>
        <end position="28"/>
    </location>
    <ligand>
        <name>ATP</name>
        <dbReference type="ChEBI" id="CHEBI:30616"/>
    </ligand>
</feature>
<feature type="binding site" evidence="3">
    <location>
        <position position="43"/>
    </location>
    <ligand>
        <name>ATP</name>
        <dbReference type="ChEBI" id="CHEBI:30616"/>
    </ligand>
</feature>
<proteinExistence type="inferred from homology"/>